<organism>
    <name type="scientific">Vibrio cholerae serotype O1 (strain M66-2)</name>
    <dbReference type="NCBI Taxonomy" id="579112"/>
    <lineage>
        <taxon>Bacteria</taxon>
        <taxon>Pseudomonadati</taxon>
        <taxon>Pseudomonadota</taxon>
        <taxon>Gammaproteobacteria</taxon>
        <taxon>Vibrionales</taxon>
        <taxon>Vibrionaceae</taxon>
        <taxon>Vibrio</taxon>
    </lineage>
</organism>
<sequence length="204" mass="22009">MIGRLRGTLIEKLPPQILIEVGGIGYEVQMPMSCIYELPNIGEEAIIYTHFVVREDAQLLYGFNTVSERALFREVIKANGVGPKMGLAILSGMTANQFVTCVEKEDISTLIKLPGVGKKTAERLVVEMKDRLKGWGAGDLFTPATDAAPVDSTPVIAQNAQEEAMSALLALGYKPPQASKAVSQVAKAGMSSEELIREALKSMV</sequence>
<reference key="1">
    <citation type="journal article" date="2008" name="PLoS ONE">
        <title>A recalibrated molecular clock and independent origins for the cholera pandemic clones.</title>
        <authorList>
            <person name="Feng L."/>
            <person name="Reeves P.R."/>
            <person name="Lan R."/>
            <person name="Ren Y."/>
            <person name="Gao C."/>
            <person name="Zhou Z."/>
            <person name="Ren Y."/>
            <person name="Cheng J."/>
            <person name="Wang W."/>
            <person name="Wang J."/>
            <person name="Qian W."/>
            <person name="Li D."/>
            <person name="Wang L."/>
        </authorList>
    </citation>
    <scope>NUCLEOTIDE SEQUENCE [LARGE SCALE GENOMIC DNA]</scope>
    <source>
        <strain>M66-2</strain>
    </source>
</reference>
<dbReference type="EMBL" id="CP001233">
    <property type="protein sequence ID" value="ACP06075.1"/>
    <property type="molecule type" value="Genomic_DNA"/>
</dbReference>
<dbReference type="RefSeq" id="WP_000580359.1">
    <property type="nucleotide sequence ID" value="NC_012578.1"/>
</dbReference>
<dbReference type="SMR" id="C3LNE9"/>
<dbReference type="KEGG" id="vcm:VCM66_1769"/>
<dbReference type="HOGENOM" id="CLU_087936_0_0_6"/>
<dbReference type="Proteomes" id="UP000001217">
    <property type="component" value="Chromosome I"/>
</dbReference>
<dbReference type="GO" id="GO:0005737">
    <property type="term" value="C:cytoplasm"/>
    <property type="evidence" value="ECO:0007669"/>
    <property type="project" value="UniProtKB-SubCell"/>
</dbReference>
<dbReference type="GO" id="GO:0009379">
    <property type="term" value="C:Holliday junction helicase complex"/>
    <property type="evidence" value="ECO:0007669"/>
    <property type="project" value="InterPro"/>
</dbReference>
<dbReference type="GO" id="GO:0048476">
    <property type="term" value="C:Holliday junction resolvase complex"/>
    <property type="evidence" value="ECO:0007669"/>
    <property type="project" value="UniProtKB-UniRule"/>
</dbReference>
<dbReference type="GO" id="GO:0005524">
    <property type="term" value="F:ATP binding"/>
    <property type="evidence" value="ECO:0007669"/>
    <property type="project" value="InterPro"/>
</dbReference>
<dbReference type="GO" id="GO:0000400">
    <property type="term" value="F:four-way junction DNA binding"/>
    <property type="evidence" value="ECO:0007669"/>
    <property type="project" value="UniProtKB-UniRule"/>
</dbReference>
<dbReference type="GO" id="GO:0009378">
    <property type="term" value="F:four-way junction helicase activity"/>
    <property type="evidence" value="ECO:0007669"/>
    <property type="project" value="InterPro"/>
</dbReference>
<dbReference type="GO" id="GO:0006310">
    <property type="term" value="P:DNA recombination"/>
    <property type="evidence" value="ECO:0007669"/>
    <property type="project" value="UniProtKB-UniRule"/>
</dbReference>
<dbReference type="GO" id="GO:0006281">
    <property type="term" value="P:DNA repair"/>
    <property type="evidence" value="ECO:0007669"/>
    <property type="project" value="UniProtKB-UniRule"/>
</dbReference>
<dbReference type="CDD" id="cd14332">
    <property type="entry name" value="UBA_RuvA_C"/>
    <property type="match status" value="1"/>
</dbReference>
<dbReference type="FunFam" id="1.10.150.20:FF:000012">
    <property type="entry name" value="Holliday junction ATP-dependent DNA helicase RuvA"/>
    <property type="match status" value="1"/>
</dbReference>
<dbReference type="FunFam" id="2.40.50.140:FF:000083">
    <property type="entry name" value="Holliday junction ATP-dependent DNA helicase RuvA"/>
    <property type="match status" value="1"/>
</dbReference>
<dbReference type="Gene3D" id="1.10.150.20">
    <property type="entry name" value="5' to 3' exonuclease, C-terminal subdomain"/>
    <property type="match status" value="1"/>
</dbReference>
<dbReference type="Gene3D" id="1.10.8.10">
    <property type="entry name" value="DNA helicase RuvA subunit, C-terminal domain"/>
    <property type="match status" value="1"/>
</dbReference>
<dbReference type="Gene3D" id="2.40.50.140">
    <property type="entry name" value="Nucleic acid-binding proteins"/>
    <property type="match status" value="1"/>
</dbReference>
<dbReference type="HAMAP" id="MF_00031">
    <property type="entry name" value="DNA_HJ_migration_RuvA"/>
    <property type="match status" value="1"/>
</dbReference>
<dbReference type="InterPro" id="IPR013849">
    <property type="entry name" value="DNA_helicase_Holl-junc_RuvA_I"/>
</dbReference>
<dbReference type="InterPro" id="IPR003583">
    <property type="entry name" value="Hlx-hairpin-Hlx_DNA-bd_motif"/>
</dbReference>
<dbReference type="InterPro" id="IPR012340">
    <property type="entry name" value="NA-bd_OB-fold"/>
</dbReference>
<dbReference type="InterPro" id="IPR000085">
    <property type="entry name" value="RuvA"/>
</dbReference>
<dbReference type="InterPro" id="IPR010994">
    <property type="entry name" value="RuvA_2-like"/>
</dbReference>
<dbReference type="InterPro" id="IPR011114">
    <property type="entry name" value="RuvA_C"/>
</dbReference>
<dbReference type="InterPro" id="IPR036267">
    <property type="entry name" value="RuvA_C_sf"/>
</dbReference>
<dbReference type="NCBIfam" id="TIGR00084">
    <property type="entry name" value="ruvA"/>
    <property type="match status" value="1"/>
</dbReference>
<dbReference type="Pfam" id="PF14520">
    <property type="entry name" value="HHH_5"/>
    <property type="match status" value="1"/>
</dbReference>
<dbReference type="Pfam" id="PF07499">
    <property type="entry name" value="RuvA_C"/>
    <property type="match status" value="1"/>
</dbReference>
<dbReference type="Pfam" id="PF01330">
    <property type="entry name" value="RuvA_N"/>
    <property type="match status" value="1"/>
</dbReference>
<dbReference type="SMART" id="SM00278">
    <property type="entry name" value="HhH1"/>
    <property type="match status" value="2"/>
</dbReference>
<dbReference type="SUPFAM" id="SSF46929">
    <property type="entry name" value="DNA helicase RuvA subunit, C-terminal domain"/>
    <property type="match status" value="1"/>
</dbReference>
<dbReference type="SUPFAM" id="SSF50249">
    <property type="entry name" value="Nucleic acid-binding proteins"/>
    <property type="match status" value="1"/>
</dbReference>
<dbReference type="SUPFAM" id="SSF47781">
    <property type="entry name" value="RuvA domain 2-like"/>
    <property type="match status" value="1"/>
</dbReference>
<feature type="chain" id="PRO_1000195183" description="Holliday junction branch migration complex subunit RuvA">
    <location>
        <begin position="1"/>
        <end position="204"/>
    </location>
</feature>
<feature type="region of interest" description="Domain I" evidence="1">
    <location>
        <begin position="1"/>
        <end position="64"/>
    </location>
</feature>
<feature type="region of interest" description="Domain II" evidence="1">
    <location>
        <begin position="65"/>
        <end position="143"/>
    </location>
</feature>
<feature type="region of interest" description="Flexible linker" evidence="1">
    <location>
        <begin position="144"/>
        <end position="155"/>
    </location>
</feature>
<feature type="region of interest" description="Domain III" evidence="1">
    <location>
        <begin position="156"/>
        <end position="204"/>
    </location>
</feature>
<accession>C3LNE9</accession>
<evidence type="ECO:0000255" key="1">
    <source>
        <dbReference type="HAMAP-Rule" id="MF_00031"/>
    </source>
</evidence>
<protein>
    <recommendedName>
        <fullName evidence="1">Holliday junction branch migration complex subunit RuvA</fullName>
    </recommendedName>
</protein>
<keyword id="KW-0963">Cytoplasm</keyword>
<keyword id="KW-0227">DNA damage</keyword>
<keyword id="KW-0233">DNA recombination</keyword>
<keyword id="KW-0234">DNA repair</keyword>
<keyword id="KW-0238">DNA-binding</keyword>
<gene>
    <name evidence="1" type="primary">ruvA</name>
    <name type="ordered locus">VCM66_1769</name>
</gene>
<comment type="function">
    <text evidence="1">The RuvA-RuvB-RuvC complex processes Holliday junction (HJ) DNA during genetic recombination and DNA repair, while the RuvA-RuvB complex plays an important role in the rescue of blocked DNA replication forks via replication fork reversal (RFR). RuvA specifically binds to HJ cruciform DNA, conferring on it an open structure. The RuvB hexamer acts as an ATP-dependent pump, pulling dsDNA into and through the RuvAB complex. HJ branch migration allows RuvC to scan DNA until it finds its consensus sequence, where it cleaves and resolves the cruciform DNA.</text>
</comment>
<comment type="subunit">
    <text evidence="1">Homotetramer. Forms an RuvA(8)-RuvB(12)-Holliday junction (HJ) complex. HJ DNA is sandwiched between 2 RuvA tetramers; dsDNA enters through RuvA and exits via RuvB. An RuvB hexamer assembles on each DNA strand where it exits the tetramer. Each RuvB hexamer is contacted by two RuvA subunits (via domain III) on 2 adjacent RuvB subunits; this complex drives branch migration. In the full resolvosome a probable DNA-RuvA(4)-RuvB(12)-RuvC(2) complex forms which resolves the HJ.</text>
</comment>
<comment type="subcellular location">
    <subcellularLocation>
        <location evidence="1">Cytoplasm</location>
    </subcellularLocation>
</comment>
<comment type="domain">
    <text evidence="1">Has three domains with a flexible linker between the domains II and III and assumes an 'L' shape. Domain III is highly mobile and contacts RuvB.</text>
</comment>
<comment type="similarity">
    <text evidence="1">Belongs to the RuvA family.</text>
</comment>
<proteinExistence type="inferred from homology"/>
<name>RUVA_VIBCM</name>